<feature type="chain" id="PRO_0000306792" description="Dicer-like protein 2">
    <location>
        <begin position="1"/>
        <end position="1451"/>
    </location>
</feature>
<feature type="domain" description="Helicase ATP-binding" evidence="3">
    <location>
        <begin position="70"/>
        <end position="247"/>
    </location>
</feature>
<feature type="domain" description="Helicase C-terminal" evidence="4">
    <location>
        <begin position="412"/>
        <end position="582"/>
    </location>
</feature>
<feature type="domain" description="Dicer dsRNA-binding fold" evidence="5">
    <location>
        <begin position="603"/>
        <end position="704"/>
    </location>
</feature>
<feature type="domain" description="RNase III 1" evidence="2">
    <location>
        <begin position="968"/>
        <end position="1111"/>
    </location>
</feature>
<feature type="domain" description="RNase III 2" evidence="2">
    <location>
        <begin position="1153"/>
        <end position="1351"/>
    </location>
</feature>
<feature type="region of interest" description="Disordered" evidence="6">
    <location>
        <begin position="34"/>
        <end position="53"/>
    </location>
</feature>
<feature type="region of interest" description="Disordered" evidence="6">
    <location>
        <begin position="1253"/>
        <end position="1272"/>
    </location>
</feature>
<feature type="short sequence motif" description="DEAH box">
    <location>
        <begin position="190"/>
        <end position="193"/>
    </location>
</feature>
<feature type="binding site" evidence="3">
    <location>
        <begin position="83"/>
        <end position="90"/>
    </location>
    <ligand>
        <name>ATP</name>
        <dbReference type="ChEBI" id="CHEBI:30616"/>
    </ligand>
</feature>
<feature type="binding site" evidence="1">
    <location>
        <position position="1192"/>
    </location>
    <ligand>
        <name>Mg(2+)</name>
        <dbReference type="ChEBI" id="CHEBI:18420"/>
    </ligand>
</feature>
<feature type="binding site" evidence="1">
    <location>
        <position position="1337"/>
    </location>
    <ligand>
        <name>Mg(2+)</name>
        <dbReference type="ChEBI" id="CHEBI:18420"/>
    </ligand>
</feature>
<feature type="binding site" evidence="1">
    <location>
        <position position="1340"/>
    </location>
    <ligand>
        <name>Mg(2+)</name>
        <dbReference type="ChEBI" id="CHEBI:18420"/>
    </ligand>
</feature>
<feature type="site" description="Important for activity" evidence="1">
    <location>
        <position position="1333"/>
    </location>
</feature>
<dbReference type="EC" id="3.1.26.-"/>
<dbReference type="EC" id="3.6.4.-"/>
<dbReference type="EMBL" id="DQ186990">
    <property type="protein sequence ID" value="ABB00357.1"/>
    <property type="molecule type" value="Genomic_DNA"/>
</dbReference>
<dbReference type="SMR" id="Q2VF18"/>
<dbReference type="OMA" id="CCVNLIR"/>
<dbReference type="GO" id="GO:0005737">
    <property type="term" value="C:cytoplasm"/>
    <property type="evidence" value="ECO:0007669"/>
    <property type="project" value="TreeGrafter"/>
</dbReference>
<dbReference type="GO" id="GO:0005634">
    <property type="term" value="C:nucleus"/>
    <property type="evidence" value="ECO:0007669"/>
    <property type="project" value="TreeGrafter"/>
</dbReference>
<dbReference type="GO" id="GO:0005524">
    <property type="term" value="F:ATP binding"/>
    <property type="evidence" value="ECO:0007669"/>
    <property type="project" value="UniProtKB-KW"/>
</dbReference>
<dbReference type="GO" id="GO:0004386">
    <property type="term" value="F:helicase activity"/>
    <property type="evidence" value="ECO:0007669"/>
    <property type="project" value="UniProtKB-KW"/>
</dbReference>
<dbReference type="GO" id="GO:0046872">
    <property type="term" value="F:metal ion binding"/>
    <property type="evidence" value="ECO:0007669"/>
    <property type="project" value="UniProtKB-KW"/>
</dbReference>
<dbReference type="GO" id="GO:0004525">
    <property type="term" value="F:ribonuclease III activity"/>
    <property type="evidence" value="ECO:0007669"/>
    <property type="project" value="InterPro"/>
</dbReference>
<dbReference type="GO" id="GO:0003723">
    <property type="term" value="F:RNA binding"/>
    <property type="evidence" value="ECO:0007669"/>
    <property type="project" value="UniProtKB-KW"/>
</dbReference>
<dbReference type="GO" id="GO:0051607">
    <property type="term" value="P:defense response to virus"/>
    <property type="evidence" value="ECO:0007669"/>
    <property type="project" value="UniProtKB-KW"/>
</dbReference>
<dbReference type="GO" id="GO:0050688">
    <property type="term" value="P:regulation of defense response to virus"/>
    <property type="evidence" value="ECO:0007669"/>
    <property type="project" value="UniProtKB-KW"/>
</dbReference>
<dbReference type="GO" id="GO:0030422">
    <property type="term" value="P:siRNA processing"/>
    <property type="evidence" value="ECO:0007669"/>
    <property type="project" value="TreeGrafter"/>
</dbReference>
<dbReference type="CDD" id="cd18034">
    <property type="entry name" value="DEXHc_dicer"/>
    <property type="match status" value="1"/>
</dbReference>
<dbReference type="CDD" id="cd00593">
    <property type="entry name" value="RIBOc"/>
    <property type="match status" value="2"/>
</dbReference>
<dbReference type="CDD" id="cd18802">
    <property type="entry name" value="SF2_C_dicer"/>
    <property type="match status" value="1"/>
</dbReference>
<dbReference type="Gene3D" id="3.30.160.380">
    <property type="entry name" value="Dicer dimerisation domain"/>
    <property type="match status" value="1"/>
</dbReference>
<dbReference type="Gene3D" id="3.40.50.300">
    <property type="entry name" value="P-loop containing nucleotide triphosphate hydrolases"/>
    <property type="match status" value="2"/>
</dbReference>
<dbReference type="Gene3D" id="1.10.1520.10">
    <property type="entry name" value="Ribonuclease III domain"/>
    <property type="match status" value="2"/>
</dbReference>
<dbReference type="InterPro" id="IPR011545">
    <property type="entry name" value="DEAD/DEAH_box_helicase_dom"/>
</dbReference>
<dbReference type="InterPro" id="IPR038248">
    <property type="entry name" value="Dicer_dimer_sf"/>
</dbReference>
<dbReference type="InterPro" id="IPR005034">
    <property type="entry name" value="Dicer_dimerisation_dom"/>
</dbReference>
<dbReference type="InterPro" id="IPR014001">
    <property type="entry name" value="Helicase_ATP-bd"/>
</dbReference>
<dbReference type="InterPro" id="IPR001650">
    <property type="entry name" value="Helicase_C-like"/>
</dbReference>
<dbReference type="InterPro" id="IPR027417">
    <property type="entry name" value="P-loop_NTPase"/>
</dbReference>
<dbReference type="InterPro" id="IPR000999">
    <property type="entry name" value="RNase_III_dom"/>
</dbReference>
<dbReference type="InterPro" id="IPR036389">
    <property type="entry name" value="RNase_III_sf"/>
</dbReference>
<dbReference type="PANTHER" id="PTHR14950">
    <property type="entry name" value="DICER-RELATED"/>
    <property type="match status" value="1"/>
</dbReference>
<dbReference type="PANTHER" id="PTHR14950:SF37">
    <property type="entry name" value="ENDORIBONUCLEASE DICER"/>
    <property type="match status" value="1"/>
</dbReference>
<dbReference type="Pfam" id="PF00270">
    <property type="entry name" value="DEAD"/>
    <property type="match status" value="1"/>
</dbReference>
<dbReference type="Pfam" id="PF03368">
    <property type="entry name" value="Dicer_dimer"/>
    <property type="match status" value="1"/>
</dbReference>
<dbReference type="Pfam" id="PF00271">
    <property type="entry name" value="Helicase_C"/>
    <property type="match status" value="1"/>
</dbReference>
<dbReference type="Pfam" id="PF00636">
    <property type="entry name" value="Ribonuclease_3"/>
    <property type="match status" value="2"/>
</dbReference>
<dbReference type="SMART" id="SM00487">
    <property type="entry name" value="DEXDc"/>
    <property type="match status" value="1"/>
</dbReference>
<dbReference type="SMART" id="SM00490">
    <property type="entry name" value="HELICc"/>
    <property type="match status" value="1"/>
</dbReference>
<dbReference type="SMART" id="SM00535">
    <property type="entry name" value="RIBOc"/>
    <property type="match status" value="2"/>
</dbReference>
<dbReference type="SUPFAM" id="SSF54768">
    <property type="entry name" value="dsRNA-binding domain-like"/>
    <property type="match status" value="1"/>
</dbReference>
<dbReference type="SUPFAM" id="SSF52540">
    <property type="entry name" value="P-loop containing nucleoside triphosphate hydrolases"/>
    <property type="match status" value="1"/>
</dbReference>
<dbReference type="SUPFAM" id="SSF69065">
    <property type="entry name" value="RNase III domain-like"/>
    <property type="match status" value="2"/>
</dbReference>
<dbReference type="PROSITE" id="PS51327">
    <property type="entry name" value="DICER_DSRBF"/>
    <property type="match status" value="1"/>
</dbReference>
<dbReference type="PROSITE" id="PS51192">
    <property type="entry name" value="HELICASE_ATP_BIND_1"/>
    <property type="match status" value="1"/>
</dbReference>
<dbReference type="PROSITE" id="PS51194">
    <property type="entry name" value="HELICASE_CTER"/>
    <property type="match status" value="1"/>
</dbReference>
<dbReference type="PROSITE" id="PS50142">
    <property type="entry name" value="RNASE_3_2"/>
    <property type="match status" value="2"/>
</dbReference>
<protein>
    <recommendedName>
        <fullName>Dicer-like protein 2</fullName>
    </recommendedName>
    <domain>
        <recommendedName>
            <fullName>Endoribonuclease DCL-2</fullName>
            <ecNumber>3.1.26.-</ecNumber>
        </recommendedName>
    </domain>
    <domain>
        <recommendedName>
            <fullName>ATP-dependent helicase DCL-2</fullName>
            <ecNumber>3.6.4.-</ecNumber>
        </recommendedName>
    </domain>
</protein>
<name>DCL2_CRYPA</name>
<accession>Q2VF18</accession>
<sequence length="1451" mass="163401">MAYYTDSSSSESEDFEDVINQVVAEEDITGAAWYDGHLSEEDSPGGKPRPKEQLPKDIVKMDARAYQLEMLEASLKENIICAMDTGSGKTHVAILRIKAELEEMPEGQVVWFLTPTVSLCAQQYAVVKAQIPSVQTKIVTGADKVDSWSSTTWDGALLNVKVIITTPQVLLDALLHGFVNISSLALMVFDEAHHCNKNHAYSRVMKEFYWESKTKHEPVPRILGLTASPVVRSDISSLKRLESTLDAVCRSPTRHREELIANSQRPALFSIIYNPKLQPYAAGFSESLTKLMAARNKLNILEDPYVVSLRAEISDRSRRKLEKAIKEKRTYVQDTMKSFCRRSMEMAKELGAWAADWFISEAIRLFLAGIYRQGASSKSFRDAEVIFLARVFQDANIEPPPPLTTHSGLSEKVQRIIEVLLNYDKDARAICFVKERATTVVLSHILTTHPEVSSKFRIGTMVGTSFVPGVKRDFLDLPETGGSQCLEAFREGRKNMLVATSVLEEGIDVPACNLIICFDKPNNLRAFIQRRGRARMRQSHLYLFVEDEAEADWEALEAQMKLQYEDEKREHERLEAIENSEALDYPEELRVESTGARLTINDAKSHLQHFVSTLASRKFVQTQPDYLIEKVSQGYQPGDQPLLKATVLLPVSVPQALRQVTSSRTWVSEKNACMDAAFQAYKALYEAGLVDDHLLPLRDRLELELEVRPGMREVRGLYNPWLSIAAACTQGDVPLCRRALKVSDGNNSELCEFELAIPVALPEMKPMVVWWDHRAQLTLRIDSDAVMADTDVRHADQTTINQQDHTSVLLSLAYGHRNMTIRDDCILRLVSKSGPLSMEQLGQVEFAPGLVTANGSSYLVRDERDQSRHPYYFESVLPSKPPAESIRKVYRGFDEDPTEATYLSVRKWPKKTGFFHRPCSPQHSPSTKPYAYILPAETTTVDRIPLVYAQMGLLMPSLVCYTELYLVAAELSRKVLAPLRISNVSMLVEAICAKSARTPENYERIEFLGDSILKTCITVNLAATKLHLPEGILSLMKDRLVSNARLCRAACDAELDQFLVTQQLVTKGWQPPYMSDLAKQDQEPESKRILSPKTLADVVEALIGVSFVDGGLPKALECIRLFIPESQPRPFSEVRDILFGAAEPKGMKLPADLQLLEQLIEYSFCEKALLVEAVTHPSYNVSGTVACYDRLEFIGDAILDYIIVEEVFALEPALENWQMHLLRTALVNADILGFLIMEWSYKQMGFEVCRANEGDSDSKSSGDSTSDKASPRLEQTEVPIPLWSFMRQSSAELTMEREITKARFEELRDPILEAMRSGTHYPWALFARLHAQKFYSDFFEALVGAIWVDAGPGFDACRAFVARSGVLPYLKRLLRDQVHVLHPKEELGRLAGRERVEYVVKETLKDDGDGKEWACEVRVGGRYVTDVTGCLFKEESRVKAATQACEILKRK</sequence>
<proteinExistence type="inferred from homology"/>
<keyword id="KW-0051">Antiviral defense</keyword>
<keyword id="KW-0930">Antiviral protein</keyword>
<keyword id="KW-0067">ATP-binding</keyword>
<keyword id="KW-0347">Helicase</keyword>
<keyword id="KW-0378">Hydrolase</keyword>
<keyword id="KW-0460">Magnesium</keyword>
<keyword id="KW-0464">Manganese</keyword>
<keyword id="KW-0479">Metal-binding</keyword>
<keyword id="KW-0547">Nucleotide-binding</keyword>
<keyword id="KW-0677">Repeat</keyword>
<keyword id="KW-0694">RNA-binding</keyword>
<reference key="1">
    <citation type="journal article" date="2007" name="Proc. Natl. Acad. Sci. U.S.A.">
        <title>Evidence that RNA silencing functions as an antiviral defense mechanism in fungi.</title>
        <authorList>
            <person name="Segers G.C."/>
            <person name="Zhang X."/>
            <person name="Deng F."/>
            <person name="Sun Q."/>
            <person name="Nuss D.L."/>
        </authorList>
    </citation>
    <scope>NUCLEOTIDE SEQUENCE [GENOMIC DNA]</scope>
    <scope>FUNCTION</scope>
</reference>
<evidence type="ECO:0000250" key="1"/>
<evidence type="ECO:0000255" key="2">
    <source>
        <dbReference type="PROSITE-ProRule" id="PRU00177"/>
    </source>
</evidence>
<evidence type="ECO:0000255" key="3">
    <source>
        <dbReference type="PROSITE-ProRule" id="PRU00541"/>
    </source>
</evidence>
<evidence type="ECO:0000255" key="4">
    <source>
        <dbReference type="PROSITE-ProRule" id="PRU00542"/>
    </source>
</evidence>
<evidence type="ECO:0000255" key="5">
    <source>
        <dbReference type="PROSITE-ProRule" id="PRU00657"/>
    </source>
</evidence>
<evidence type="ECO:0000256" key="6">
    <source>
        <dbReference type="SAM" id="MobiDB-lite"/>
    </source>
</evidence>
<evidence type="ECO:0000269" key="7">
    <source>
    </source>
</evidence>
<organism>
    <name type="scientific">Cryphonectria parasitica</name>
    <name type="common">Chestnut blight fungus</name>
    <name type="synonym">Endothia parasitica</name>
    <dbReference type="NCBI Taxonomy" id="5116"/>
    <lineage>
        <taxon>Eukaryota</taxon>
        <taxon>Fungi</taxon>
        <taxon>Dikarya</taxon>
        <taxon>Ascomycota</taxon>
        <taxon>Pezizomycotina</taxon>
        <taxon>Sordariomycetes</taxon>
        <taxon>Sordariomycetidae</taxon>
        <taxon>Diaporthales</taxon>
        <taxon>Cryphonectriaceae</taxon>
        <taxon>Cryphonectria-Endothia species complex</taxon>
        <taxon>Cryphonectria</taxon>
    </lineage>
</organism>
<comment type="function">
    <text evidence="7">Dicer-like endonuclease involved in cleaving double-stranded RNA in the RNA interference (RNAi) pathway. Produces 21 to 25 bp dsRNAs (siRNAs) which target the selective destruction of homologous RNAs leading to sequence-specific suppression of gene expression, called post-transcriptional gene silencing (PTGS). Part of a broad host defense, DCL-2 is involved in antiviral defense against mycoviruses like the hypovirus CHV1-EP713 and the reovirus MyRV1-Cp9B21.</text>
</comment>
<comment type="cofactor">
    <cofactor evidence="1">
        <name>Mg(2+)</name>
        <dbReference type="ChEBI" id="CHEBI:18420"/>
    </cofactor>
    <cofactor evidence="1">
        <name>Mn(2+)</name>
        <dbReference type="ChEBI" id="CHEBI:29035"/>
    </cofactor>
</comment>
<comment type="similarity">
    <text evidence="5">Belongs to the helicase family. Dicer subfamily.</text>
</comment>
<gene>
    <name type="primary">DCL-2</name>
</gene>